<keyword id="KW-0963">Cytoplasm</keyword>
<keyword id="KW-0238">DNA-binding</keyword>
<keyword id="KW-0479">Metal-binding</keyword>
<keyword id="KW-0539">Nucleus</keyword>
<keyword id="KW-0597">Phosphoprotein</keyword>
<keyword id="KW-1185">Reference proteome</keyword>
<keyword id="KW-0804">Transcription</keyword>
<keyword id="KW-0805">Transcription regulation</keyword>
<keyword id="KW-0862">Zinc</keyword>
<proteinExistence type="evidence at protein level"/>
<gene>
    <name type="primary">Smad9</name>
    <name type="synonym">Madh8</name>
    <name type="synonym">Madh9</name>
    <name type="synonym">Smad8</name>
</gene>
<evidence type="ECO:0000250" key="1"/>
<evidence type="ECO:0000250" key="2">
    <source>
        <dbReference type="UniProtKB" id="O15198"/>
    </source>
</evidence>
<evidence type="ECO:0000255" key="3">
    <source>
        <dbReference type="PROSITE-ProRule" id="PRU00438"/>
    </source>
</evidence>
<evidence type="ECO:0000255" key="4">
    <source>
        <dbReference type="PROSITE-ProRule" id="PRU00439"/>
    </source>
</evidence>
<evidence type="ECO:0000256" key="5">
    <source>
        <dbReference type="SAM" id="MobiDB-lite"/>
    </source>
</evidence>
<evidence type="ECO:0000305" key="6"/>
<dbReference type="EMBL" id="AF012347">
    <property type="protein sequence ID" value="AAC53515.1"/>
    <property type="molecule type" value="mRNA"/>
</dbReference>
<dbReference type="RefSeq" id="NP_620227.1">
    <property type="nucleotide sequence ID" value="NM_138872.1"/>
</dbReference>
<dbReference type="SMR" id="O54835"/>
<dbReference type="BioGRID" id="250104">
    <property type="interactions" value="1"/>
</dbReference>
<dbReference type="FunCoup" id="O54835">
    <property type="interactions" value="1009"/>
</dbReference>
<dbReference type="STRING" id="10116.ENSRNOP00000000102"/>
<dbReference type="iPTMnet" id="O54835"/>
<dbReference type="PhosphoSitePlus" id="O54835"/>
<dbReference type="jPOST" id="O54835"/>
<dbReference type="PaxDb" id="10116-ENSRNOP00000000102"/>
<dbReference type="GeneID" id="85435"/>
<dbReference type="KEGG" id="rno:85435"/>
<dbReference type="UCSC" id="RGD:71004">
    <property type="organism name" value="rat"/>
</dbReference>
<dbReference type="AGR" id="RGD:71004"/>
<dbReference type="CTD" id="4093"/>
<dbReference type="RGD" id="71004">
    <property type="gene designation" value="Smad9"/>
</dbReference>
<dbReference type="eggNOG" id="KOG3701">
    <property type="taxonomic scope" value="Eukaryota"/>
</dbReference>
<dbReference type="InParanoid" id="O54835"/>
<dbReference type="PhylomeDB" id="O54835"/>
<dbReference type="Reactome" id="R-RNO-201451">
    <property type="pathway name" value="Signaling by BMP"/>
</dbReference>
<dbReference type="PRO" id="PR:O54835"/>
<dbReference type="Proteomes" id="UP000002494">
    <property type="component" value="Unplaced"/>
</dbReference>
<dbReference type="GO" id="GO:0005737">
    <property type="term" value="C:cytoplasm"/>
    <property type="evidence" value="ECO:0000266"/>
    <property type="project" value="RGD"/>
</dbReference>
<dbReference type="GO" id="GO:0071144">
    <property type="term" value="C:heteromeric SMAD protein complex"/>
    <property type="evidence" value="ECO:0000318"/>
    <property type="project" value="GO_Central"/>
</dbReference>
<dbReference type="GO" id="GO:0005634">
    <property type="term" value="C:nucleus"/>
    <property type="evidence" value="ECO:0000266"/>
    <property type="project" value="RGD"/>
</dbReference>
<dbReference type="GO" id="GO:0000981">
    <property type="term" value="F:DNA-binding transcription factor activity, RNA polymerase II-specific"/>
    <property type="evidence" value="ECO:0000318"/>
    <property type="project" value="GO_Central"/>
</dbReference>
<dbReference type="GO" id="GO:0070411">
    <property type="term" value="F:I-SMAD binding"/>
    <property type="evidence" value="ECO:0000318"/>
    <property type="project" value="GO_Central"/>
</dbReference>
<dbReference type="GO" id="GO:0046872">
    <property type="term" value="F:metal ion binding"/>
    <property type="evidence" value="ECO:0007669"/>
    <property type="project" value="UniProtKB-KW"/>
</dbReference>
<dbReference type="GO" id="GO:0000978">
    <property type="term" value="F:RNA polymerase II cis-regulatory region sequence-specific DNA binding"/>
    <property type="evidence" value="ECO:0000318"/>
    <property type="project" value="GO_Central"/>
</dbReference>
<dbReference type="GO" id="GO:0009653">
    <property type="term" value="P:anatomical structure morphogenesis"/>
    <property type="evidence" value="ECO:0000318"/>
    <property type="project" value="GO_Central"/>
</dbReference>
<dbReference type="GO" id="GO:0030509">
    <property type="term" value="P:BMP signaling pathway"/>
    <property type="evidence" value="ECO:0000266"/>
    <property type="project" value="RGD"/>
</dbReference>
<dbReference type="GO" id="GO:0060348">
    <property type="term" value="P:bone development"/>
    <property type="evidence" value="ECO:0000266"/>
    <property type="project" value="RGD"/>
</dbReference>
<dbReference type="GO" id="GO:0051216">
    <property type="term" value="P:cartilage development"/>
    <property type="evidence" value="ECO:0000266"/>
    <property type="project" value="RGD"/>
</dbReference>
<dbReference type="GO" id="GO:0030154">
    <property type="term" value="P:cell differentiation"/>
    <property type="evidence" value="ECO:0000318"/>
    <property type="project" value="GO_Central"/>
</dbReference>
<dbReference type="GO" id="GO:0030902">
    <property type="term" value="P:hindbrain development"/>
    <property type="evidence" value="ECO:0000266"/>
    <property type="project" value="RGD"/>
</dbReference>
<dbReference type="GO" id="GO:0006879">
    <property type="term" value="P:intracellular iron ion homeostasis"/>
    <property type="evidence" value="ECO:0000266"/>
    <property type="project" value="RGD"/>
</dbReference>
<dbReference type="GO" id="GO:0030901">
    <property type="term" value="P:midbrain development"/>
    <property type="evidence" value="ECO:0000266"/>
    <property type="project" value="RGD"/>
</dbReference>
<dbReference type="GO" id="GO:0001880">
    <property type="term" value="P:Mullerian duct regression"/>
    <property type="evidence" value="ECO:0000315"/>
    <property type="project" value="RGD"/>
</dbReference>
<dbReference type="GO" id="GO:0001649">
    <property type="term" value="P:osteoblast differentiation"/>
    <property type="evidence" value="ECO:0000266"/>
    <property type="project" value="RGD"/>
</dbReference>
<dbReference type="GO" id="GO:0045597">
    <property type="term" value="P:positive regulation of cell differentiation"/>
    <property type="evidence" value="ECO:0000314"/>
    <property type="project" value="RGD"/>
</dbReference>
<dbReference type="GO" id="GO:0045893">
    <property type="term" value="P:positive regulation of DNA-templated transcription"/>
    <property type="evidence" value="ECO:0000314"/>
    <property type="project" value="RGD"/>
</dbReference>
<dbReference type="GO" id="GO:0006357">
    <property type="term" value="P:regulation of transcription by RNA polymerase II"/>
    <property type="evidence" value="ECO:0000318"/>
    <property type="project" value="GO_Central"/>
</dbReference>
<dbReference type="GO" id="GO:0001666">
    <property type="term" value="P:response to hypoxia"/>
    <property type="evidence" value="ECO:0000270"/>
    <property type="project" value="RGD"/>
</dbReference>
<dbReference type="GO" id="GO:0060395">
    <property type="term" value="P:SMAD protein signal transduction"/>
    <property type="evidence" value="ECO:0000266"/>
    <property type="project" value="RGD"/>
</dbReference>
<dbReference type="GO" id="GO:0048863">
    <property type="term" value="P:stem cell differentiation"/>
    <property type="evidence" value="ECO:0000266"/>
    <property type="project" value="RGD"/>
</dbReference>
<dbReference type="GO" id="GO:0007179">
    <property type="term" value="P:transforming growth factor beta receptor signaling pathway"/>
    <property type="evidence" value="ECO:0000318"/>
    <property type="project" value="GO_Central"/>
</dbReference>
<dbReference type="GO" id="GO:0001657">
    <property type="term" value="P:ureteric bud development"/>
    <property type="evidence" value="ECO:0000266"/>
    <property type="project" value="RGD"/>
</dbReference>
<dbReference type="CDD" id="cd10490">
    <property type="entry name" value="MH1_SMAD_1_5_9"/>
    <property type="match status" value="1"/>
</dbReference>
<dbReference type="FunFam" id="2.60.200.10:FF:000001">
    <property type="entry name" value="Mothers against decapentaplegic homolog"/>
    <property type="match status" value="1"/>
</dbReference>
<dbReference type="FunFam" id="3.90.520.10:FF:000001">
    <property type="entry name" value="Mothers against decapentaplegic homolog"/>
    <property type="match status" value="1"/>
</dbReference>
<dbReference type="Gene3D" id="2.60.200.10">
    <property type="match status" value="1"/>
</dbReference>
<dbReference type="Gene3D" id="3.90.520.10">
    <property type="entry name" value="SMAD MH1 domain"/>
    <property type="match status" value="1"/>
</dbReference>
<dbReference type="InterPro" id="IPR013790">
    <property type="entry name" value="Dwarfin"/>
</dbReference>
<dbReference type="InterPro" id="IPR003619">
    <property type="entry name" value="MAD_homology1_Dwarfin-type"/>
</dbReference>
<dbReference type="InterPro" id="IPR013019">
    <property type="entry name" value="MAD_homology_MH1"/>
</dbReference>
<dbReference type="InterPro" id="IPR017855">
    <property type="entry name" value="SMAD-like_dom_sf"/>
</dbReference>
<dbReference type="InterPro" id="IPR001132">
    <property type="entry name" value="SMAD_dom_Dwarfin-type"/>
</dbReference>
<dbReference type="InterPro" id="IPR008984">
    <property type="entry name" value="SMAD_FHA_dom_sf"/>
</dbReference>
<dbReference type="InterPro" id="IPR036578">
    <property type="entry name" value="SMAD_MH1_sf"/>
</dbReference>
<dbReference type="PANTHER" id="PTHR13703:SF41">
    <property type="entry name" value="MOTHERS AGAINST DECAPENTAPLEGIC HOMOLOG 9"/>
    <property type="match status" value="1"/>
</dbReference>
<dbReference type="PANTHER" id="PTHR13703">
    <property type="entry name" value="SMAD"/>
    <property type="match status" value="1"/>
</dbReference>
<dbReference type="Pfam" id="PF03165">
    <property type="entry name" value="MH1"/>
    <property type="match status" value="1"/>
</dbReference>
<dbReference type="Pfam" id="PF03166">
    <property type="entry name" value="MH2"/>
    <property type="match status" value="1"/>
</dbReference>
<dbReference type="SMART" id="SM00523">
    <property type="entry name" value="DWA"/>
    <property type="match status" value="1"/>
</dbReference>
<dbReference type="SMART" id="SM00524">
    <property type="entry name" value="DWB"/>
    <property type="match status" value="1"/>
</dbReference>
<dbReference type="SUPFAM" id="SSF56366">
    <property type="entry name" value="SMAD MH1 domain"/>
    <property type="match status" value="1"/>
</dbReference>
<dbReference type="SUPFAM" id="SSF49879">
    <property type="entry name" value="SMAD/FHA domain"/>
    <property type="match status" value="1"/>
</dbReference>
<dbReference type="PROSITE" id="PS51075">
    <property type="entry name" value="MH1"/>
    <property type="match status" value="1"/>
</dbReference>
<dbReference type="PROSITE" id="PS51076">
    <property type="entry name" value="MH2"/>
    <property type="match status" value="1"/>
</dbReference>
<comment type="function">
    <text evidence="1">Transcriptional modulator activated by BMP (bone morphogenetic proteins) type 1 receptor kinase. SMAD9 is a receptor-regulated SMAD (R-SMAD) (By similarity). Has been shown to be activated by activin type I receptor-like kinase-2 (ALK-2) which stimulates heteromerization between SMAD9 and SMAD4. ALK-2 binds TGF-beta, activin and BMP.</text>
</comment>
<comment type="subunit">
    <text evidence="1 2">Interaction with the co-SMAD SMAD4. Interacts with PEBP2-alpha subunit (By similarity). Interacts with RANBP3L (By similarity).</text>
</comment>
<comment type="subcellular location">
    <subcellularLocation>
        <location evidence="1">Cytoplasm</location>
    </subcellularLocation>
    <subcellularLocation>
        <location evidence="1">Nucleus</location>
    </subcellularLocation>
    <text evidence="1">In the cytoplasm in the absence of ligand. Migration to the nucleus when complexed with SMAD4 (By similarity).</text>
</comment>
<comment type="PTM">
    <text evidence="1">Phosphorylated on serine by BMP (bone morphogenetic proteins) type 1 receptor kinase (By similarity). Phosphorylated by activin type I receptor-like kinase-2 (ALK-2).</text>
</comment>
<comment type="similarity">
    <text evidence="6">Belongs to the dwarfin/SMAD family.</text>
</comment>
<feature type="chain" id="PRO_0000090877" description="Mothers against decapentaplegic homolog 9">
    <location>
        <begin position="1"/>
        <end position="434"/>
    </location>
</feature>
<feature type="domain" description="MH1" evidence="3">
    <location>
        <begin position="16"/>
        <end position="140"/>
    </location>
</feature>
<feature type="domain" description="MH2" evidence="4">
    <location>
        <begin position="236"/>
        <end position="434"/>
    </location>
</feature>
<feature type="region of interest" description="Disordered" evidence="5">
    <location>
        <begin position="171"/>
        <end position="222"/>
    </location>
</feature>
<feature type="compositionally biased region" description="Polar residues" evidence="5">
    <location>
        <begin position="202"/>
        <end position="221"/>
    </location>
</feature>
<feature type="binding site" evidence="1">
    <location>
        <position position="68"/>
    </location>
    <ligand>
        <name>Zn(2+)</name>
        <dbReference type="ChEBI" id="CHEBI:29105"/>
    </ligand>
</feature>
<feature type="binding site" evidence="1">
    <location>
        <position position="113"/>
    </location>
    <ligand>
        <name>Zn(2+)</name>
        <dbReference type="ChEBI" id="CHEBI:29105"/>
    </ligand>
</feature>
<feature type="binding site" evidence="1">
    <location>
        <position position="125"/>
    </location>
    <ligand>
        <name>Zn(2+)</name>
        <dbReference type="ChEBI" id="CHEBI:29105"/>
    </ligand>
</feature>
<feature type="binding site" evidence="1">
    <location>
        <position position="130"/>
    </location>
    <ligand>
        <name>Zn(2+)</name>
        <dbReference type="ChEBI" id="CHEBI:29105"/>
    </ligand>
</feature>
<reference key="1">
    <citation type="journal article" date="1997" name="Proc. Natl. Acad. Sci. U.S.A.">
        <title>Smad8 mediates the signaling of the ALK-2 receptor serine kinase.</title>
        <authorList>
            <person name="Chen Y."/>
            <person name="Bhushan A."/>
            <person name="Vale W.W."/>
        </authorList>
    </citation>
    <scope>NUCLEOTIDE SEQUENCE [MRNA]</scope>
    <scope>CHARACTERIZATION</scope>
    <source>
        <tissue>Brain</tissue>
    </source>
</reference>
<sequence length="434" mass="48992">MHPSTPISSLFSFTSPAVKRLLGWKQGDEEEKWAEKAVDSLVKKLKKKKGAMDELERALSCPGQPSKCVTIPRSLDGRLQVSHRKGLPHVIYCRVWRWPDLQSHHELKPLECCEFPFGSKQKEVCINPYHYRRVETPVLPPVLVPRHSEYNPQLSLLAKFRSASLHSEPLMPHNATYPDSFQQSLGPAPPSSPGHVFPQSPCPTSYPQSPGSPSESDSPYQHSDFRPVCYEEPLHWCSVAYYELNNRVGETFQASSRSVLIDGFTDPSNNRNRFCLGLLSNVNRNSTIENTRRHIGKGVHLYYVGGEVYAECVSDSSIFVQSRNCNYQHGFHPATVCKIPSGCSLKVFNNQLFAQLLAQLLAQSVHHGFEVVYELTKMCTIRMSFVKGWGAEYHRQDVTSTPCWIEIHLHGPLQWLDKVLTQMGSPHNPISSVS</sequence>
<accession>O54835</accession>
<name>SMAD9_RAT</name>
<protein>
    <recommendedName>
        <fullName>Mothers against decapentaplegic homolog 9</fullName>
        <shortName>MAD homolog 9</shortName>
        <shortName>Mothers against DPP homolog 9</shortName>
    </recommendedName>
    <alternativeName>
        <fullName>SMAD family member 9</fullName>
        <shortName>SMAD 9</shortName>
        <shortName>Smad9</shortName>
    </alternativeName>
    <alternativeName>
        <fullName>Smad8</fullName>
    </alternativeName>
</protein>
<organism>
    <name type="scientific">Rattus norvegicus</name>
    <name type="common">Rat</name>
    <dbReference type="NCBI Taxonomy" id="10116"/>
    <lineage>
        <taxon>Eukaryota</taxon>
        <taxon>Metazoa</taxon>
        <taxon>Chordata</taxon>
        <taxon>Craniata</taxon>
        <taxon>Vertebrata</taxon>
        <taxon>Euteleostomi</taxon>
        <taxon>Mammalia</taxon>
        <taxon>Eutheria</taxon>
        <taxon>Euarchontoglires</taxon>
        <taxon>Glires</taxon>
        <taxon>Rodentia</taxon>
        <taxon>Myomorpha</taxon>
        <taxon>Muroidea</taxon>
        <taxon>Muridae</taxon>
        <taxon>Murinae</taxon>
        <taxon>Rattus</taxon>
    </lineage>
</organism>